<reference key="1">
    <citation type="journal article" date="2004" name="Curr. Genet.">
        <title>Structural features and transcript-editing analysis of sugarcane (Saccharum officinarum L.) chloroplast genome.</title>
        <authorList>
            <person name="Calsa T. Jr."/>
            <person name="Carraro D.M."/>
            <person name="Benatti M.R."/>
            <person name="Barbosa A.C."/>
            <person name="Kitajima J.P."/>
            <person name="Carrer H."/>
        </authorList>
    </citation>
    <scope>NUCLEOTIDE SEQUENCE [LARGE SCALE GENOMIC DNA]</scope>
    <source>
        <strain>cv. SP-80-3280</strain>
    </source>
</reference>
<organism>
    <name type="scientific">Saccharum hybrid</name>
    <name type="common">Sugarcane</name>
    <dbReference type="NCBI Taxonomy" id="15819"/>
    <lineage>
        <taxon>Eukaryota</taxon>
        <taxon>Viridiplantae</taxon>
        <taxon>Streptophyta</taxon>
        <taxon>Embryophyta</taxon>
        <taxon>Tracheophyta</taxon>
        <taxon>Spermatophyta</taxon>
        <taxon>Magnoliopsida</taxon>
        <taxon>Liliopsida</taxon>
        <taxon>Poales</taxon>
        <taxon>Poaceae</taxon>
        <taxon>PACMAD clade</taxon>
        <taxon>Panicoideae</taxon>
        <taxon>Andropogonodae</taxon>
        <taxon>Andropogoneae</taxon>
        <taxon>Saccharinae</taxon>
        <taxon>Saccharum</taxon>
    </lineage>
</organism>
<name>PETG_SACHY</name>
<evidence type="ECO:0000255" key="1">
    <source>
        <dbReference type="HAMAP-Rule" id="MF_00432"/>
    </source>
</evidence>
<keyword id="KW-0150">Chloroplast</keyword>
<keyword id="KW-0249">Electron transport</keyword>
<keyword id="KW-0472">Membrane</keyword>
<keyword id="KW-0602">Photosynthesis</keyword>
<keyword id="KW-0934">Plastid</keyword>
<keyword id="KW-0793">Thylakoid</keyword>
<keyword id="KW-0812">Transmembrane</keyword>
<keyword id="KW-1133">Transmembrane helix</keyword>
<keyword id="KW-0813">Transport</keyword>
<geneLocation type="chloroplast"/>
<gene>
    <name evidence="1" type="primary">petG</name>
    <name type="ordered locus">PS142</name>
</gene>
<dbReference type="EMBL" id="AE009947">
    <property type="protein sequence ID" value="AAT44710.1"/>
    <property type="molecule type" value="Genomic_DNA"/>
</dbReference>
<dbReference type="SMR" id="Q6L382"/>
<dbReference type="GO" id="GO:0009535">
    <property type="term" value="C:chloroplast thylakoid membrane"/>
    <property type="evidence" value="ECO:0007669"/>
    <property type="project" value="UniProtKB-SubCell"/>
</dbReference>
<dbReference type="GO" id="GO:0009512">
    <property type="term" value="C:cytochrome b6f complex"/>
    <property type="evidence" value="ECO:0007669"/>
    <property type="project" value="InterPro"/>
</dbReference>
<dbReference type="GO" id="GO:0045158">
    <property type="term" value="F:electron transporter, transferring electrons within cytochrome b6/f complex of photosystem II activity"/>
    <property type="evidence" value="ECO:0007669"/>
    <property type="project" value="UniProtKB-UniRule"/>
</dbReference>
<dbReference type="GO" id="GO:0017004">
    <property type="term" value="P:cytochrome complex assembly"/>
    <property type="evidence" value="ECO:0007669"/>
    <property type="project" value="UniProtKB-UniRule"/>
</dbReference>
<dbReference type="GO" id="GO:0015979">
    <property type="term" value="P:photosynthesis"/>
    <property type="evidence" value="ECO:0007669"/>
    <property type="project" value="UniProtKB-KW"/>
</dbReference>
<dbReference type="HAMAP" id="MF_00432">
    <property type="entry name" value="Cytb6_f_PetG"/>
    <property type="match status" value="1"/>
</dbReference>
<dbReference type="InterPro" id="IPR003683">
    <property type="entry name" value="Cyt_6/f_cplx_su5"/>
</dbReference>
<dbReference type="InterPro" id="IPR036099">
    <property type="entry name" value="Cyt_6/f_cplx_su5_sf"/>
</dbReference>
<dbReference type="NCBIfam" id="NF001907">
    <property type="entry name" value="PRK00665.1"/>
    <property type="match status" value="1"/>
</dbReference>
<dbReference type="Pfam" id="PF02529">
    <property type="entry name" value="PetG"/>
    <property type="match status" value="1"/>
</dbReference>
<dbReference type="PIRSF" id="PIRSF000034">
    <property type="entry name" value="Cyt_b6-f_V"/>
    <property type="match status" value="1"/>
</dbReference>
<dbReference type="SUPFAM" id="SSF103446">
    <property type="entry name" value="PetG subunit of the cytochrome b6f complex"/>
    <property type="match status" value="1"/>
</dbReference>
<proteinExistence type="inferred from homology"/>
<comment type="function">
    <text evidence="1">Component of the cytochrome b6-f complex, which mediates electron transfer between photosystem II (PSII) and photosystem I (PSI), cyclic electron flow around PSI, and state transitions. PetG is required for either the stability or assembly of the cytochrome b6-f complex.</text>
</comment>
<comment type="subunit">
    <text evidence="1">The 4 large subunits of the cytochrome b6-f complex are cytochrome b6, subunit IV (17 kDa polypeptide, PetD), cytochrome f and the Rieske protein, while the 4 small subunits are PetG, PetL, PetM and PetN. The complex functions as a dimer.</text>
</comment>
<comment type="subcellular location">
    <subcellularLocation>
        <location evidence="1">Plastid</location>
        <location evidence="1">Chloroplast thylakoid membrane</location>
        <topology evidence="1">Single-pass membrane protein</topology>
    </subcellularLocation>
</comment>
<comment type="similarity">
    <text evidence="1">Belongs to the PetG family.</text>
</comment>
<feature type="chain" id="PRO_0000216402" description="Cytochrome b6-f complex subunit 5">
    <location>
        <begin position="1"/>
        <end position="37"/>
    </location>
</feature>
<feature type="transmembrane region" description="Helical" evidence="1">
    <location>
        <begin position="5"/>
        <end position="25"/>
    </location>
</feature>
<accession>Q6L382</accession>
<protein>
    <recommendedName>
        <fullName evidence="1">Cytochrome b6-f complex subunit 5</fullName>
    </recommendedName>
    <alternativeName>
        <fullName evidence="1">Cytochrome b6-f complex subunit PetG</fullName>
    </alternativeName>
    <alternativeName>
        <fullName evidence="1">Cytochrome b6-f complex subunit V</fullName>
    </alternativeName>
</protein>
<sequence>MIEVFLFGIVLGLIPITLAGLFVTAYLQYRRGDQLDL</sequence>